<gene>
    <name evidence="1" type="primary">araA2</name>
    <name type="ordered locus">CA_C1346</name>
</gene>
<proteinExistence type="inferred from homology"/>
<sequence>MLENKKMEFWFVVGSQHLYGEEALKEVRKNSETIVDELNKSANLPYKIIFKDLATSADKIKEIMKEVNYRDEVAGVITWMHTFSPAKMWIAGTKILQKPLLHFATQYNENIPWKTIDMDYMNLHQSAHGDREYGFINARLKKHNKVVVGYWKDKEVQKQVSDWMKVAAGYIASESIKVARFGDNMRNVAVTEGDKVEAQIQFGWTVDYFGIGDLVAEMDKVSQDEINKTYEEFKDLYILDPGENDPAFYEKQVKEQIKIEIGLRRFLEKGNYNAFTTNFEDLYGMKQLPGLAVQRLNAEGYGFAGEGDWKTAALDRLLKVMTNNTATGFMEDYTYELSRGNEKALGAHMLEVDPTFASDKPKVIVKPLGIGDKEDPARLIFNGSTGKGVAVSMLDLGTHYRLIINGLTAVKPDEDMPNLPVAKMVWKPEPNFIEGVKSWIYAGGGHHTVVSLELTVEQVYDWSRMVGLEAVIIDKDTKLRDIIEKTTK</sequence>
<organism>
    <name type="scientific">Clostridium acetobutylicum (strain ATCC 824 / DSM 792 / JCM 1419 / IAM 19013 / LMG 5710 / NBRC 13948 / NRRL B-527 / VKM B-1787 / 2291 / W)</name>
    <dbReference type="NCBI Taxonomy" id="272562"/>
    <lineage>
        <taxon>Bacteria</taxon>
        <taxon>Bacillati</taxon>
        <taxon>Bacillota</taxon>
        <taxon>Clostridia</taxon>
        <taxon>Eubacteriales</taxon>
        <taxon>Clostridiaceae</taxon>
        <taxon>Clostridium</taxon>
    </lineage>
</organism>
<feature type="chain" id="PRO_0000198384" description="L-arabinose isomerase 2">
    <location>
        <begin position="1"/>
        <end position="488"/>
    </location>
</feature>
<feature type="binding site" evidence="1">
    <location>
        <position position="306"/>
    </location>
    <ligand>
        <name>Mn(2+)</name>
        <dbReference type="ChEBI" id="CHEBI:29035"/>
    </ligand>
</feature>
<feature type="binding site" evidence="1">
    <location>
        <position position="331"/>
    </location>
    <ligand>
        <name>Mn(2+)</name>
        <dbReference type="ChEBI" id="CHEBI:29035"/>
    </ligand>
</feature>
<feature type="binding site" evidence="1">
    <location>
        <position position="348"/>
    </location>
    <ligand>
        <name>Mn(2+)</name>
        <dbReference type="ChEBI" id="CHEBI:29035"/>
    </ligand>
</feature>
<feature type="binding site" evidence="1">
    <location>
        <position position="447"/>
    </location>
    <ligand>
        <name>Mn(2+)</name>
        <dbReference type="ChEBI" id="CHEBI:29035"/>
    </ligand>
</feature>
<name>ARAA2_CLOAB</name>
<evidence type="ECO:0000255" key="1">
    <source>
        <dbReference type="HAMAP-Rule" id="MF_00519"/>
    </source>
</evidence>
<protein>
    <recommendedName>
        <fullName evidence="1">L-arabinose isomerase 2</fullName>
        <ecNumber evidence="1">5.3.1.4</ecNumber>
    </recommendedName>
</protein>
<reference key="1">
    <citation type="journal article" date="2001" name="J. Bacteriol.">
        <title>Genome sequence and comparative analysis of the solvent-producing bacterium Clostridium acetobutylicum.</title>
        <authorList>
            <person name="Noelling J."/>
            <person name="Breton G."/>
            <person name="Omelchenko M.V."/>
            <person name="Makarova K.S."/>
            <person name="Zeng Q."/>
            <person name="Gibson R."/>
            <person name="Lee H.M."/>
            <person name="Dubois J."/>
            <person name="Qiu D."/>
            <person name="Hitti J."/>
            <person name="Wolf Y.I."/>
            <person name="Tatusov R.L."/>
            <person name="Sabathe F."/>
            <person name="Doucette-Stamm L.A."/>
            <person name="Soucaille P."/>
            <person name="Daly M.J."/>
            <person name="Bennett G.N."/>
            <person name="Koonin E.V."/>
            <person name="Smith D.R."/>
        </authorList>
    </citation>
    <scope>NUCLEOTIDE SEQUENCE [LARGE SCALE GENOMIC DNA]</scope>
    <source>
        <strain>ATCC 824 / DSM 792 / JCM 1419 / IAM 19013 / LMG 5710 / NBRC 13948 / NRRL B-527 / VKM B-1787 / 2291 / W</strain>
    </source>
</reference>
<accession>Q97JE0</accession>
<keyword id="KW-0054">Arabinose catabolism</keyword>
<keyword id="KW-0119">Carbohydrate metabolism</keyword>
<keyword id="KW-0413">Isomerase</keyword>
<keyword id="KW-0464">Manganese</keyword>
<keyword id="KW-0479">Metal-binding</keyword>
<keyword id="KW-1185">Reference proteome</keyword>
<comment type="function">
    <text evidence="1">Catalyzes the conversion of L-arabinose to L-ribulose.</text>
</comment>
<comment type="catalytic activity">
    <reaction evidence="1">
        <text>beta-L-arabinopyranose = L-ribulose</text>
        <dbReference type="Rhea" id="RHEA:14821"/>
        <dbReference type="ChEBI" id="CHEBI:16880"/>
        <dbReference type="ChEBI" id="CHEBI:40886"/>
        <dbReference type="EC" id="5.3.1.4"/>
    </reaction>
</comment>
<comment type="cofactor">
    <cofactor evidence="1">
        <name>Mn(2+)</name>
        <dbReference type="ChEBI" id="CHEBI:29035"/>
    </cofactor>
    <text evidence="1">Binds 1 Mn(2+) ion per subunit.</text>
</comment>
<comment type="pathway">
    <text evidence="1">Carbohydrate degradation; L-arabinose degradation via L-ribulose; D-xylulose 5-phosphate from L-arabinose (bacterial route): step 1/3.</text>
</comment>
<comment type="similarity">
    <text evidence="1">Belongs to the arabinose isomerase family.</text>
</comment>
<dbReference type="EC" id="5.3.1.4" evidence="1"/>
<dbReference type="EMBL" id="AE001437">
    <property type="protein sequence ID" value="AAK79314.1"/>
    <property type="molecule type" value="Genomic_DNA"/>
</dbReference>
<dbReference type="PIR" id="G97065">
    <property type="entry name" value="G97065"/>
</dbReference>
<dbReference type="RefSeq" id="NP_347974.1">
    <property type="nucleotide sequence ID" value="NC_003030.1"/>
</dbReference>
<dbReference type="SMR" id="Q97JE0"/>
<dbReference type="STRING" id="272562.CA_C1346"/>
<dbReference type="DNASU" id="1117529"/>
<dbReference type="KEGG" id="cac:CA_C1346"/>
<dbReference type="PATRIC" id="fig|272562.8.peg.1551"/>
<dbReference type="eggNOG" id="COG2160">
    <property type="taxonomic scope" value="Bacteria"/>
</dbReference>
<dbReference type="HOGENOM" id="CLU_045663_0_0_9"/>
<dbReference type="OrthoDB" id="9765600at2"/>
<dbReference type="BRENDA" id="5.3.1.4">
    <property type="organism ID" value="1452"/>
</dbReference>
<dbReference type="UniPathway" id="UPA00145">
    <property type="reaction ID" value="UER00565"/>
</dbReference>
<dbReference type="Proteomes" id="UP000000814">
    <property type="component" value="Chromosome"/>
</dbReference>
<dbReference type="GO" id="GO:0005829">
    <property type="term" value="C:cytosol"/>
    <property type="evidence" value="ECO:0007669"/>
    <property type="project" value="TreeGrafter"/>
</dbReference>
<dbReference type="GO" id="GO:0008733">
    <property type="term" value="F:L-arabinose isomerase activity"/>
    <property type="evidence" value="ECO:0007669"/>
    <property type="project" value="UniProtKB-UniRule"/>
</dbReference>
<dbReference type="GO" id="GO:0030145">
    <property type="term" value="F:manganese ion binding"/>
    <property type="evidence" value="ECO:0007669"/>
    <property type="project" value="UniProtKB-UniRule"/>
</dbReference>
<dbReference type="GO" id="GO:0019569">
    <property type="term" value="P:L-arabinose catabolic process to xylulose 5-phosphate"/>
    <property type="evidence" value="ECO:0007669"/>
    <property type="project" value="UniProtKB-UniRule"/>
</dbReference>
<dbReference type="CDD" id="cd03557">
    <property type="entry name" value="L-arabinose_isomerase"/>
    <property type="match status" value="1"/>
</dbReference>
<dbReference type="Gene3D" id="3.40.50.10940">
    <property type="match status" value="1"/>
</dbReference>
<dbReference type="HAMAP" id="MF_00519">
    <property type="entry name" value="Arabinose_Isome"/>
    <property type="match status" value="1"/>
</dbReference>
<dbReference type="InterPro" id="IPR024664">
    <property type="entry name" value="Ara_Isoase_C"/>
</dbReference>
<dbReference type="InterPro" id="IPR055390">
    <property type="entry name" value="AraA_central"/>
</dbReference>
<dbReference type="InterPro" id="IPR055389">
    <property type="entry name" value="AraA_N"/>
</dbReference>
<dbReference type="InterPro" id="IPR038583">
    <property type="entry name" value="AraA_N_sf"/>
</dbReference>
<dbReference type="InterPro" id="IPR004216">
    <property type="entry name" value="Fuc/Ara_isomerase_C"/>
</dbReference>
<dbReference type="InterPro" id="IPR009015">
    <property type="entry name" value="Fucose_isomerase_N/cen_sf"/>
</dbReference>
<dbReference type="InterPro" id="IPR003762">
    <property type="entry name" value="Lara_isomerase"/>
</dbReference>
<dbReference type="NCBIfam" id="NF002795">
    <property type="entry name" value="PRK02929.1"/>
    <property type="match status" value="1"/>
</dbReference>
<dbReference type="PANTHER" id="PTHR38464">
    <property type="entry name" value="L-ARABINOSE ISOMERASE"/>
    <property type="match status" value="1"/>
</dbReference>
<dbReference type="PANTHER" id="PTHR38464:SF1">
    <property type="entry name" value="L-ARABINOSE ISOMERASE"/>
    <property type="match status" value="1"/>
</dbReference>
<dbReference type="Pfam" id="PF24856">
    <property type="entry name" value="AraA_central"/>
    <property type="match status" value="1"/>
</dbReference>
<dbReference type="Pfam" id="PF02610">
    <property type="entry name" value="AraA_N"/>
    <property type="match status" value="1"/>
</dbReference>
<dbReference type="Pfam" id="PF11762">
    <property type="entry name" value="Arabinose_Iso_C"/>
    <property type="match status" value="1"/>
</dbReference>
<dbReference type="PIRSF" id="PIRSF001478">
    <property type="entry name" value="L-ara_isomerase"/>
    <property type="match status" value="1"/>
</dbReference>
<dbReference type="SUPFAM" id="SSF50443">
    <property type="entry name" value="FucI/AraA C-terminal domain-like"/>
    <property type="match status" value="1"/>
</dbReference>
<dbReference type="SUPFAM" id="SSF53743">
    <property type="entry name" value="FucI/AraA N-terminal and middle domains"/>
    <property type="match status" value="1"/>
</dbReference>